<proteinExistence type="inferred from homology"/>
<organism>
    <name type="scientific">Methanococcus aeolicus (strain ATCC BAA-1280 / DSM 17508 / OCM 812 / Nankai-3)</name>
    <dbReference type="NCBI Taxonomy" id="419665"/>
    <lineage>
        <taxon>Archaea</taxon>
        <taxon>Methanobacteriati</taxon>
        <taxon>Methanobacteriota</taxon>
        <taxon>Methanomada group</taxon>
        <taxon>Methanococci</taxon>
        <taxon>Methanococcales</taxon>
        <taxon>Methanococcaceae</taxon>
        <taxon>Methanococcus</taxon>
    </lineage>
</organism>
<reference key="1">
    <citation type="submission" date="2007-06" db="EMBL/GenBank/DDBJ databases">
        <title>Complete sequence of Methanococcus aeolicus Nankai-3.</title>
        <authorList>
            <consortium name="US DOE Joint Genome Institute"/>
            <person name="Copeland A."/>
            <person name="Lucas S."/>
            <person name="Lapidus A."/>
            <person name="Barry K."/>
            <person name="Glavina del Rio T."/>
            <person name="Dalin E."/>
            <person name="Tice H."/>
            <person name="Pitluck S."/>
            <person name="Chain P."/>
            <person name="Malfatti S."/>
            <person name="Shin M."/>
            <person name="Vergez L."/>
            <person name="Schmutz J."/>
            <person name="Larimer F."/>
            <person name="Land M."/>
            <person name="Hauser L."/>
            <person name="Kyrpides N."/>
            <person name="Lykidis A."/>
            <person name="Sieprawska-Lupa M."/>
            <person name="Whitman W.B."/>
            <person name="Richardson P."/>
        </authorList>
    </citation>
    <scope>NUCLEOTIDE SEQUENCE [LARGE SCALE GENOMIC DNA]</scope>
    <source>
        <strain>ATCC BAA-1280 / DSM 17508 / OCM 812 / Nankai-3</strain>
    </source>
</reference>
<feature type="chain" id="PRO_1000046862" description="Cobalt-precorrin-5B C(1)-methyltransferase">
    <location>
        <begin position="1"/>
        <end position="378"/>
    </location>
</feature>
<name>CBID_META3</name>
<keyword id="KW-0169">Cobalamin biosynthesis</keyword>
<keyword id="KW-0489">Methyltransferase</keyword>
<keyword id="KW-0949">S-adenosyl-L-methionine</keyword>
<keyword id="KW-0808">Transferase</keyword>
<accession>A6UT10</accession>
<dbReference type="EC" id="2.1.1.195" evidence="1"/>
<dbReference type="EMBL" id="CP000743">
    <property type="protein sequence ID" value="ABR55632.1"/>
    <property type="molecule type" value="Genomic_DNA"/>
</dbReference>
<dbReference type="RefSeq" id="WP_011972764.1">
    <property type="nucleotide sequence ID" value="NC_009635.1"/>
</dbReference>
<dbReference type="SMR" id="A6UT10"/>
<dbReference type="STRING" id="419665.Maeo_0040"/>
<dbReference type="GeneID" id="5327512"/>
<dbReference type="KEGG" id="mae:Maeo_0040"/>
<dbReference type="eggNOG" id="arCOG04383">
    <property type="taxonomic scope" value="Archaea"/>
</dbReference>
<dbReference type="HOGENOM" id="CLU_041273_1_0_2"/>
<dbReference type="OrthoDB" id="10423at2157"/>
<dbReference type="UniPathway" id="UPA00148">
    <property type="reaction ID" value="UER00227"/>
</dbReference>
<dbReference type="Proteomes" id="UP000001106">
    <property type="component" value="Chromosome"/>
</dbReference>
<dbReference type="GO" id="GO:0043780">
    <property type="term" value="F:cobalt-precorrin-5B C1-methyltransferase activity"/>
    <property type="evidence" value="ECO:0007669"/>
    <property type="project" value="RHEA"/>
</dbReference>
<dbReference type="GO" id="GO:0019251">
    <property type="term" value="P:anaerobic cobalamin biosynthetic process"/>
    <property type="evidence" value="ECO:0007669"/>
    <property type="project" value="UniProtKB-UniRule"/>
</dbReference>
<dbReference type="GO" id="GO:0032259">
    <property type="term" value="P:methylation"/>
    <property type="evidence" value="ECO:0007669"/>
    <property type="project" value="UniProtKB-KW"/>
</dbReference>
<dbReference type="Gene3D" id="3.30.2110.10">
    <property type="entry name" value="CbiD-like"/>
    <property type="match status" value="1"/>
</dbReference>
<dbReference type="HAMAP" id="MF_00787">
    <property type="entry name" value="CbiD"/>
    <property type="match status" value="1"/>
</dbReference>
<dbReference type="InterPro" id="IPR002748">
    <property type="entry name" value="CbiD"/>
</dbReference>
<dbReference type="InterPro" id="IPR036074">
    <property type="entry name" value="CbiD_sf"/>
</dbReference>
<dbReference type="NCBIfam" id="TIGR00312">
    <property type="entry name" value="cbiD"/>
    <property type="match status" value="1"/>
</dbReference>
<dbReference type="PANTHER" id="PTHR35863">
    <property type="entry name" value="COBALT-PRECORRIN-5B C(1)-METHYLTRANSFERASE"/>
    <property type="match status" value="1"/>
</dbReference>
<dbReference type="PANTHER" id="PTHR35863:SF1">
    <property type="entry name" value="COBALT-PRECORRIN-5B C(1)-METHYLTRANSFERASE"/>
    <property type="match status" value="1"/>
</dbReference>
<dbReference type="Pfam" id="PF01888">
    <property type="entry name" value="CbiD"/>
    <property type="match status" value="1"/>
</dbReference>
<dbReference type="PIRSF" id="PIRSF026782">
    <property type="entry name" value="CbiD"/>
    <property type="match status" value="1"/>
</dbReference>
<dbReference type="SUPFAM" id="SSF111342">
    <property type="entry name" value="CbiD-like"/>
    <property type="match status" value="1"/>
</dbReference>
<sequence length="378" mass="41990">MIYDFLKEKKFGYTTGSCVVAGAYCGIYYLKHSVKLNIVELENSKNDKLIIPIEDVKLGKIATIKNINNTGKIKPNRATTIVKKFSGEDIDITNGIDIVVDVELLKMEKDKPKIEIVGGNGVGIVTKDGLQIKKGEYAINPKPREMIKNNIINLLDDDERAIIKITIPKGEELAKKTLNPKLGIIGGISILGTTGIVRPMSNEAYKESLAPQIDVALANNYKKLIFTPGNIGTKYAKIKYGVDDDNIVEVSNFWSFMLDKAVEKGVKDILIFGHSGKIIKLAGGIYDTHSKVADARNEILTAYSSPFINDKQILKNILYSNTTEEIVKILEKENILHEVFNLIAERVVERVSSRWEGIKFSCVIIDMKGDILGSHIYS</sequence>
<comment type="function">
    <text evidence="1">Catalyzes the methylation of C-1 in cobalt-precorrin-5B to form cobalt-precorrin-6A.</text>
</comment>
<comment type="catalytic activity">
    <reaction evidence="1">
        <text>Co-precorrin-5B + S-adenosyl-L-methionine = Co-precorrin-6A + S-adenosyl-L-homocysteine</text>
        <dbReference type="Rhea" id="RHEA:26285"/>
        <dbReference type="ChEBI" id="CHEBI:57856"/>
        <dbReference type="ChEBI" id="CHEBI:59789"/>
        <dbReference type="ChEBI" id="CHEBI:60063"/>
        <dbReference type="ChEBI" id="CHEBI:60064"/>
        <dbReference type="EC" id="2.1.1.195"/>
    </reaction>
</comment>
<comment type="pathway">
    <text evidence="1">Cofactor biosynthesis; adenosylcobalamin biosynthesis; cob(II)yrinate a,c-diamide from sirohydrochlorin (anaerobic route): step 6/10.</text>
</comment>
<comment type="similarity">
    <text evidence="1">Belongs to the CbiD family.</text>
</comment>
<gene>
    <name evidence="1" type="primary">cbiD</name>
    <name type="ordered locus">Maeo_0040</name>
</gene>
<protein>
    <recommendedName>
        <fullName evidence="1">Cobalt-precorrin-5B C(1)-methyltransferase</fullName>
        <ecNumber evidence="1">2.1.1.195</ecNumber>
    </recommendedName>
    <alternativeName>
        <fullName evidence="1">Cobalt-precorrin-6A synthase</fullName>
    </alternativeName>
</protein>
<evidence type="ECO:0000255" key="1">
    <source>
        <dbReference type="HAMAP-Rule" id="MF_00787"/>
    </source>
</evidence>